<organism>
    <name type="scientific">Homo sapiens</name>
    <name type="common">Human</name>
    <dbReference type="NCBI Taxonomy" id="9606"/>
    <lineage>
        <taxon>Eukaryota</taxon>
        <taxon>Metazoa</taxon>
        <taxon>Chordata</taxon>
        <taxon>Craniata</taxon>
        <taxon>Vertebrata</taxon>
        <taxon>Euteleostomi</taxon>
        <taxon>Mammalia</taxon>
        <taxon>Eutheria</taxon>
        <taxon>Euarchontoglires</taxon>
        <taxon>Primates</taxon>
        <taxon>Haplorrhini</taxon>
        <taxon>Catarrhini</taxon>
        <taxon>Hominidae</taxon>
        <taxon>Homo</taxon>
    </lineage>
</organism>
<proteinExistence type="evidence at protein level"/>
<feature type="signal peptide" evidence="2">
    <location>
        <begin position="1"/>
        <end position="28"/>
    </location>
</feature>
<feature type="chain" id="PRO_0000003972" description="Protocadherin gamma-B1">
    <location>
        <begin position="29"/>
        <end position="927"/>
    </location>
</feature>
<feature type="topological domain" description="Extracellular" evidence="2">
    <location>
        <begin position="29"/>
        <end position="687"/>
    </location>
</feature>
<feature type="transmembrane region" description="Helical" evidence="2">
    <location>
        <begin position="688"/>
        <end position="708"/>
    </location>
</feature>
<feature type="topological domain" description="Cytoplasmic" evidence="2">
    <location>
        <begin position="709"/>
        <end position="927"/>
    </location>
</feature>
<feature type="domain" description="Cadherin 1" evidence="3">
    <location>
        <begin position="29"/>
        <end position="130"/>
    </location>
</feature>
<feature type="domain" description="Cadherin 2" evidence="3">
    <location>
        <begin position="131"/>
        <end position="239"/>
    </location>
</feature>
<feature type="domain" description="Cadherin 3" evidence="3">
    <location>
        <begin position="240"/>
        <end position="343"/>
    </location>
</feature>
<feature type="domain" description="Cadherin 4" evidence="3">
    <location>
        <begin position="344"/>
        <end position="448"/>
    </location>
</feature>
<feature type="domain" description="Cadherin 5" evidence="3">
    <location>
        <begin position="449"/>
        <end position="558"/>
    </location>
</feature>
<feature type="domain" description="Cadherin 6" evidence="3">
    <location>
        <begin position="566"/>
        <end position="671"/>
    </location>
</feature>
<feature type="region of interest" description="Disordered" evidence="4">
    <location>
        <begin position="797"/>
        <end position="836"/>
    </location>
</feature>
<feature type="region of interest" description="Disordered" evidence="4">
    <location>
        <begin position="897"/>
        <end position="927"/>
    </location>
</feature>
<feature type="compositionally biased region" description="Polar residues" evidence="4">
    <location>
        <begin position="799"/>
        <end position="836"/>
    </location>
</feature>
<feature type="compositionally biased region" description="Basic residues" evidence="4">
    <location>
        <begin position="917"/>
        <end position="927"/>
    </location>
</feature>
<feature type="glycosylation site" description="N-linked (GlcNAc...) asparagine" evidence="2">
    <location>
        <position position="41"/>
    </location>
</feature>
<feature type="glycosylation site" description="N-linked (GlcNAc...) asparagine" evidence="2">
    <location>
        <position position="73"/>
    </location>
</feature>
<feature type="glycosylation site" description="N-linked (GlcNAc...) asparagine" evidence="2">
    <location>
        <position position="300"/>
    </location>
</feature>
<feature type="glycosylation site" description="N-linked (GlcNAc...) asparagine" evidence="2">
    <location>
        <position position="415"/>
    </location>
</feature>
<feature type="glycosylation site" description="N-linked (GlcNAc...) asparagine" evidence="2">
    <location>
        <position position="541"/>
    </location>
</feature>
<feature type="splice variant" id="VSP_008684" description="In isoform 2." evidence="5 6">
    <original>QAPPNTD</original>
    <variation>VSFCKSS</variation>
    <location>
        <begin position="804"/>
        <end position="810"/>
    </location>
</feature>
<feature type="splice variant" id="VSP_008685" description="In isoform 2." evidence="5 6">
    <location>
        <begin position="811"/>
        <end position="927"/>
    </location>
</feature>
<evidence type="ECO:0000250" key="1"/>
<evidence type="ECO:0000255" key="2"/>
<evidence type="ECO:0000255" key="3">
    <source>
        <dbReference type="PROSITE-ProRule" id="PRU00043"/>
    </source>
</evidence>
<evidence type="ECO:0000256" key="4">
    <source>
        <dbReference type="SAM" id="MobiDB-lite"/>
    </source>
</evidence>
<evidence type="ECO:0000303" key="5">
    <source>
    </source>
</evidence>
<evidence type="ECO:0000303" key="6">
    <source>
    </source>
</evidence>
<accession>Q9Y5G3</accession>
<accession>Q3SY75</accession>
<accession>Q9Y5C8</accession>
<comment type="function">
    <text>Potential calcium-dependent cell-adhesion protein. May be involved in the establishment and maintenance of specific neuronal connections in the brain.</text>
</comment>
<comment type="interaction">
    <interactant intactId="EBI-21584477">
        <id>Q9Y5G3-2</id>
    </interactant>
    <interactant intactId="EBI-466029">
        <id>P42858</id>
        <label>HTT</label>
    </interactant>
    <organismsDiffer>false</organismsDiffer>
    <experiments>3</experiments>
</comment>
<comment type="interaction">
    <interactant intactId="EBI-21584477">
        <id>Q9Y5G3-2</id>
    </interactant>
    <interactant intactId="EBI-720609">
        <id>O76024</id>
        <label>WFS1</label>
    </interactant>
    <organismsDiffer>false</organismsDiffer>
    <experiments>3</experiments>
</comment>
<comment type="subcellular location">
    <subcellularLocation>
        <location evidence="1">Cell membrane</location>
        <topology evidence="1">Single-pass type I membrane protein</topology>
    </subcellularLocation>
</comment>
<comment type="alternative products">
    <event type="alternative splicing"/>
    <isoform>
        <id>Q9Y5G3-1</id>
        <name>1</name>
        <sequence type="displayed"/>
    </isoform>
    <isoform>
        <id>Q9Y5G3-2</id>
        <name>2</name>
        <name>Short</name>
        <sequence type="described" ref="VSP_008684 VSP_008685"/>
    </isoform>
</comment>
<keyword id="KW-0025">Alternative splicing</keyword>
<keyword id="KW-0106">Calcium</keyword>
<keyword id="KW-0130">Cell adhesion</keyword>
<keyword id="KW-1003">Cell membrane</keyword>
<keyword id="KW-0325">Glycoprotein</keyword>
<keyword id="KW-0472">Membrane</keyword>
<keyword id="KW-1267">Proteomics identification</keyword>
<keyword id="KW-1185">Reference proteome</keyword>
<keyword id="KW-0677">Repeat</keyword>
<keyword id="KW-0732">Signal</keyword>
<keyword id="KW-0812">Transmembrane</keyword>
<keyword id="KW-1133">Transmembrane helix</keyword>
<gene>
    <name type="primary">PCDHGB1</name>
</gene>
<sequence>MQRAREAEMMKSQVLFPFLLSLFCGAISQQIRYTIPEELANGSRVGKLAKDLGLSVRELPTRKLRVSAEDYFNVSLESGDLLVNGRIDREKICGRKLECALEFETVAENPMNVFHVVVVIQDINDNAPRFVAKGIDLEICESALPGVKFSLDSAQDADVEGNSLKLYTINPNQYFSLSTKESPDGSKYPVLLLEKPLDREHQSSHRLILTAMDGGDPPLSGTTHIWIRVTDANDNAPVFSQEVYRVSLQENVPWGTSVLRVMATDQDEGINAEITYAFLNSPISTSLFNLNPNTGDITTNGTLDFEETSRYVLSVEAKDGGVHTAHCNVQIEIVDENDNAPEVTFMSFSNQIPEDSDLGTVIALIKVRDKDSGQNGMVTCYTQEEVPFKLESTSKNYYKLVIAGALNREQTADYNVTIIATDKGKPALSSRTSITLHISDINDNAPVFHQASYVVHVSENNPPGASIAQVSASDPDLGPNGRVSYSILASDLEPRELLSYVSVSPQSGVVFAQRAFDHEQLRAFELTLQARDQGSPALSANVSLRVLVGDLNDNAPRVLYPALGPDGSALFDMVPRAAEPGYLVTKVVAVDADSGHNAWLSYHVLQASEPGLFSLGLRTGEVRTARALGDRDAARQRLLVAVRDGGQPPLSATATLHLIFADSLQEVLPDLSDRPEPSDPQTELQFYLVVALALISVLFLLAVILAIALRLRRSSSLDTEGCFQTGLCSKSGPGVPPNHSEGTLPYSYNLCIASHSAKTEFNSLNLTPEMAPPQDLLCDDPSMVVCASNEDHKIAYDPSLSSHQAPPNTDWRFSQAQRPGTSGSQNGDDTGTWPNNQFDTEMLQAMILASASEAADGSSTLGGGAGTMGLSARYGPQFTLQHVPDYRQNVYIPGSNATLTNAAGKRDGKAPAGGNGNKKKSGKKEKK</sequence>
<reference key="1">
    <citation type="journal article" date="1999" name="Cell">
        <title>A striking organization of a large family of human neural cadherin-like cell adhesion genes.</title>
        <authorList>
            <person name="Wu Q."/>
            <person name="Maniatis T."/>
        </authorList>
    </citation>
    <scope>NUCLEOTIDE SEQUENCE [MRNA] (ISOFORMS 1 AND 2)</scope>
    <source>
        <tissue>Brain</tissue>
    </source>
</reference>
<reference key="2">
    <citation type="submission" date="2005-09" db="EMBL/GenBank/DDBJ databases">
        <authorList>
            <person name="Mural R.J."/>
            <person name="Istrail S."/>
            <person name="Sutton G.G."/>
            <person name="Florea L."/>
            <person name="Halpern A.L."/>
            <person name="Mobarry C.M."/>
            <person name="Lippert R."/>
            <person name="Walenz B."/>
            <person name="Shatkay H."/>
            <person name="Dew I."/>
            <person name="Miller J.R."/>
            <person name="Flanigan M.J."/>
            <person name="Edwards N.J."/>
            <person name="Bolanos R."/>
            <person name="Fasulo D."/>
            <person name="Halldorsson B.V."/>
            <person name="Hannenhalli S."/>
            <person name="Turner R."/>
            <person name="Yooseph S."/>
            <person name="Lu F."/>
            <person name="Nusskern D.R."/>
            <person name="Shue B.C."/>
            <person name="Zheng X.H."/>
            <person name="Zhong F."/>
            <person name="Delcher A.L."/>
            <person name="Huson D.H."/>
            <person name="Kravitz S.A."/>
            <person name="Mouchard L."/>
            <person name="Reinert K."/>
            <person name="Remington K.A."/>
            <person name="Clark A.G."/>
            <person name="Waterman M.S."/>
            <person name="Eichler E.E."/>
            <person name="Adams M.D."/>
            <person name="Hunkapiller M.W."/>
            <person name="Myers E.W."/>
            <person name="Venter J.C."/>
        </authorList>
    </citation>
    <scope>NUCLEOTIDE SEQUENCE [LARGE SCALE GENOMIC DNA]</scope>
</reference>
<reference key="3">
    <citation type="journal article" date="2004" name="Genome Res.">
        <title>The status, quality, and expansion of the NIH full-length cDNA project: the Mammalian Gene Collection (MGC).</title>
        <authorList>
            <consortium name="The MGC Project Team"/>
        </authorList>
    </citation>
    <scope>NUCLEOTIDE SEQUENCE [LARGE SCALE MRNA] (ISOFORM 2)</scope>
</reference>
<name>PCDGD_HUMAN</name>
<dbReference type="EMBL" id="AF152330">
    <property type="protein sequence ID" value="AAD43724.1"/>
    <property type="molecule type" value="mRNA"/>
</dbReference>
<dbReference type="EMBL" id="AF152517">
    <property type="protein sequence ID" value="AAD43777.1"/>
    <property type="molecule type" value="mRNA"/>
</dbReference>
<dbReference type="EMBL" id="CH471062">
    <property type="protein sequence ID" value="EAW61955.1"/>
    <property type="molecule type" value="Genomic_DNA"/>
</dbReference>
<dbReference type="EMBL" id="BC103926">
    <property type="protein sequence ID" value="AAI03927.1"/>
    <property type="molecule type" value="mRNA"/>
</dbReference>
<dbReference type="EMBL" id="BC103927">
    <property type="protein sequence ID" value="AAI03928.1"/>
    <property type="molecule type" value="mRNA"/>
</dbReference>
<dbReference type="CCDS" id="CCDS54923.1">
    <molecule id="Q9Y5G3-1"/>
</dbReference>
<dbReference type="CCDS" id="CCDS75330.1">
    <molecule id="Q9Y5G3-2"/>
</dbReference>
<dbReference type="RefSeq" id="NP_061745.1">
    <molecule id="Q9Y5G3-1"/>
    <property type="nucleotide sequence ID" value="NM_018922.3"/>
</dbReference>
<dbReference type="RefSeq" id="NP_115266.1">
    <molecule id="Q9Y5G3-2"/>
    <property type="nucleotide sequence ID" value="NM_032095.1"/>
</dbReference>
<dbReference type="SMR" id="Q9Y5G3"/>
<dbReference type="BioGRID" id="121044">
    <property type="interactions" value="82"/>
</dbReference>
<dbReference type="FunCoup" id="Q9Y5G3">
    <property type="interactions" value="66"/>
</dbReference>
<dbReference type="IntAct" id="Q9Y5G3">
    <property type="interactions" value="74"/>
</dbReference>
<dbReference type="STRING" id="9606.ENSP00000429273"/>
<dbReference type="GlyConnect" id="1686">
    <property type="glycosylation" value="4 N-Linked glycans (1 site)"/>
</dbReference>
<dbReference type="GlyCosmos" id="Q9Y5G3">
    <property type="glycosylation" value="5 sites, 3 glycans"/>
</dbReference>
<dbReference type="GlyGen" id="Q9Y5G3">
    <property type="glycosylation" value="5 sites, 3 N-linked glycans (1 site)"/>
</dbReference>
<dbReference type="iPTMnet" id="Q9Y5G3"/>
<dbReference type="PhosphoSitePlus" id="Q9Y5G3"/>
<dbReference type="SwissPalm" id="Q9Y5G3"/>
<dbReference type="BioMuta" id="PCDHGB1"/>
<dbReference type="DMDM" id="37999833"/>
<dbReference type="jPOST" id="Q9Y5G3"/>
<dbReference type="MassIVE" id="Q9Y5G3"/>
<dbReference type="PaxDb" id="9606-ENSP00000429273"/>
<dbReference type="PeptideAtlas" id="Q9Y5G3"/>
<dbReference type="TopDownProteomics" id="Q9Y5G3-2">
    <molecule id="Q9Y5G3-2"/>
</dbReference>
<dbReference type="Antibodypedia" id="56126">
    <property type="antibodies" value="96 antibodies from 14 providers"/>
</dbReference>
<dbReference type="DNASU" id="56104"/>
<dbReference type="Ensembl" id="ENST00000523390.2">
    <molecule id="Q9Y5G3-1"/>
    <property type="protein sequence ID" value="ENSP00000429273.1"/>
    <property type="gene ID" value="ENSG00000254221.3"/>
</dbReference>
<dbReference type="Ensembl" id="ENST00000611598.1">
    <molecule id="Q9Y5G3-2"/>
    <property type="protein sequence ID" value="ENSP00000478900.1"/>
    <property type="gene ID" value="ENSG00000254221.3"/>
</dbReference>
<dbReference type="GeneID" id="56104"/>
<dbReference type="KEGG" id="hsa:56104"/>
<dbReference type="MANE-Select" id="ENST00000523390.2">
    <property type="protein sequence ID" value="ENSP00000429273.1"/>
    <property type="RefSeq nucleotide sequence ID" value="NM_018922.3"/>
    <property type="RefSeq protein sequence ID" value="NP_061745.1"/>
</dbReference>
<dbReference type="UCSC" id="uc003ljo.3">
    <molecule id="Q9Y5G3-1"/>
    <property type="organism name" value="human"/>
</dbReference>
<dbReference type="AGR" id="HGNC:8708"/>
<dbReference type="CTD" id="56104"/>
<dbReference type="DisGeNET" id="56104"/>
<dbReference type="GeneCards" id="PCDHGB1"/>
<dbReference type="HGNC" id="HGNC:8708">
    <property type="gene designation" value="PCDHGB1"/>
</dbReference>
<dbReference type="HPA" id="ENSG00000254221">
    <property type="expression patterns" value="Tissue enriched (brain)"/>
</dbReference>
<dbReference type="MalaCards" id="PCDHGB1"/>
<dbReference type="MIM" id="604968">
    <property type="type" value="gene"/>
</dbReference>
<dbReference type="MIM" id="606299">
    <property type="type" value="gene"/>
</dbReference>
<dbReference type="neXtProt" id="NX_Q9Y5G3"/>
<dbReference type="PharmGKB" id="PA33056"/>
<dbReference type="VEuPathDB" id="HostDB:ENSG00000254221"/>
<dbReference type="eggNOG" id="KOG3594">
    <property type="taxonomic scope" value="Eukaryota"/>
</dbReference>
<dbReference type="GeneTree" id="ENSGT00940000163837"/>
<dbReference type="HOGENOM" id="CLU_006480_3_0_1"/>
<dbReference type="InParanoid" id="Q9Y5G3"/>
<dbReference type="OMA" id="HVSFCKP"/>
<dbReference type="OrthoDB" id="6252479at2759"/>
<dbReference type="PAN-GO" id="Q9Y5G3">
    <property type="GO annotations" value="2 GO annotations based on evolutionary models"/>
</dbReference>
<dbReference type="PhylomeDB" id="Q9Y5G3"/>
<dbReference type="TreeFam" id="TF332299"/>
<dbReference type="PathwayCommons" id="Q9Y5G3"/>
<dbReference type="SignaLink" id="Q9Y5G3"/>
<dbReference type="SIGNOR" id="Q9Y5G3"/>
<dbReference type="BioGRID-ORCS" id="56104">
    <property type="hits" value="10 hits in 1094 CRISPR screens"/>
</dbReference>
<dbReference type="GenomeRNAi" id="56104"/>
<dbReference type="Pharos" id="Q9Y5G3">
    <property type="development level" value="Tdark"/>
</dbReference>
<dbReference type="PRO" id="PR:Q9Y5G3"/>
<dbReference type="Proteomes" id="UP000005640">
    <property type="component" value="Chromosome 5"/>
</dbReference>
<dbReference type="RNAct" id="Q9Y5G3">
    <property type="molecule type" value="protein"/>
</dbReference>
<dbReference type="Bgee" id="ENSG00000254221">
    <property type="expression patterns" value="Expressed in cortical plate and 94 other cell types or tissues"/>
</dbReference>
<dbReference type="GO" id="GO:0030426">
    <property type="term" value="C:growth cone"/>
    <property type="evidence" value="ECO:0007669"/>
    <property type="project" value="Ensembl"/>
</dbReference>
<dbReference type="GO" id="GO:0005886">
    <property type="term" value="C:plasma membrane"/>
    <property type="evidence" value="ECO:0000318"/>
    <property type="project" value="GO_Central"/>
</dbReference>
<dbReference type="GO" id="GO:0005509">
    <property type="term" value="F:calcium ion binding"/>
    <property type="evidence" value="ECO:0007669"/>
    <property type="project" value="InterPro"/>
</dbReference>
<dbReference type="GO" id="GO:0007155">
    <property type="term" value="P:cell adhesion"/>
    <property type="evidence" value="ECO:0000318"/>
    <property type="project" value="GO_Central"/>
</dbReference>
<dbReference type="GO" id="GO:0007156">
    <property type="term" value="P:homophilic cell adhesion via plasma membrane adhesion molecules"/>
    <property type="evidence" value="ECO:0007669"/>
    <property type="project" value="InterPro"/>
</dbReference>
<dbReference type="GO" id="GO:0007399">
    <property type="term" value="P:nervous system development"/>
    <property type="evidence" value="ECO:0007669"/>
    <property type="project" value="UniProtKB-ARBA"/>
</dbReference>
<dbReference type="CDD" id="cd11304">
    <property type="entry name" value="Cadherin_repeat"/>
    <property type="match status" value="6"/>
</dbReference>
<dbReference type="FunFam" id="2.60.40.60:FF:000004">
    <property type="entry name" value="Protocadherin 1 gamma 2"/>
    <property type="match status" value="1"/>
</dbReference>
<dbReference type="FunFam" id="2.60.40.60:FF:000001">
    <property type="entry name" value="Protocadherin alpha 2"/>
    <property type="match status" value="1"/>
</dbReference>
<dbReference type="FunFam" id="2.60.40.60:FF:000002">
    <property type="entry name" value="Protocadherin alpha 2"/>
    <property type="match status" value="1"/>
</dbReference>
<dbReference type="FunFam" id="2.60.40.60:FF:000006">
    <property type="entry name" value="Protocadherin alpha 2"/>
    <property type="match status" value="1"/>
</dbReference>
<dbReference type="FunFam" id="2.60.40.60:FF:000129">
    <property type="entry name" value="protocadherin alpha-C2 isoform X1"/>
    <property type="match status" value="1"/>
</dbReference>
<dbReference type="FunFam" id="2.60.40.60:FF:000018">
    <property type="entry name" value="Protocadherin gamma c3"/>
    <property type="match status" value="1"/>
</dbReference>
<dbReference type="Gene3D" id="2.60.40.60">
    <property type="entry name" value="Cadherins"/>
    <property type="match status" value="6"/>
</dbReference>
<dbReference type="InterPro" id="IPR002126">
    <property type="entry name" value="Cadherin-like_dom"/>
</dbReference>
<dbReference type="InterPro" id="IPR015919">
    <property type="entry name" value="Cadherin-like_sf"/>
</dbReference>
<dbReference type="InterPro" id="IPR032455">
    <property type="entry name" value="Cadherin_C"/>
</dbReference>
<dbReference type="InterPro" id="IPR031904">
    <property type="entry name" value="Cadherin_CBD"/>
</dbReference>
<dbReference type="InterPro" id="IPR020894">
    <property type="entry name" value="Cadherin_CS"/>
</dbReference>
<dbReference type="InterPro" id="IPR013164">
    <property type="entry name" value="Cadherin_N"/>
</dbReference>
<dbReference type="InterPro" id="IPR050174">
    <property type="entry name" value="Protocadherin/Cadherin-CA"/>
</dbReference>
<dbReference type="PANTHER" id="PTHR24028">
    <property type="entry name" value="CADHERIN-87A"/>
    <property type="match status" value="1"/>
</dbReference>
<dbReference type="PANTHER" id="PTHR24028:SF106">
    <property type="entry name" value="PROTOCADHERIN GAMMA-B1"/>
    <property type="match status" value="1"/>
</dbReference>
<dbReference type="Pfam" id="PF00028">
    <property type="entry name" value="Cadherin"/>
    <property type="match status" value="5"/>
</dbReference>
<dbReference type="Pfam" id="PF08266">
    <property type="entry name" value="Cadherin_2"/>
    <property type="match status" value="1"/>
</dbReference>
<dbReference type="Pfam" id="PF16492">
    <property type="entry name" value="Cadherin_C_2"/>
    <property type="match status" value="1"/>
</dbReference>
<dbReference type="Pfam" id="PF15974">
    <property type="entry name" value="Cadherin_tail"/>
    <property type="match status" value="1"/>
</dbReference>
<dbReference type="PRINTS" id="PR00205">
    <property type="entry name" value="CADHERIN"/>
</dbReference>
<dbReference type="SMART" id="SM00112">
    <property type="entry name" value="CA"/>
    <property type="match status" value="6"/>
</dbReference>
<dbReference type="SUPFAM" id="SSF49313">
    <property type="entry name" value="Cadherin-like"/>
    <property type="match status" value="6"/>
</dbReference>
<dbReference type="PROSITE" id="PS00232">
    <property type="entry name" value="CADHERIN_1"/>
    <property type="match status" value="5"/>
</dbReference>
<dbReference type="PROSITE" id="PS50268">
    <property type="entry name" value="CADHERIN_2"/>
    <property type="match status" value="6"/>
</dbReference>
<protein>
    <recommendedName>
        <fullName>Protocadherin gamma-B1</fullName>
        <shortName>PCDH-gamma-B1</shortName>
    </recommendedName>
</protein>